<keyword id="KW-0067">ATP-binding</keyword>
<keyword id="KW-0119">Carbohydrate metabolism</keyword>
<keyword id="KW-0418">Kinase</keyword>
<keyword id="KW-0479">Metal-binding</keyword>
<keyword id="KW-0547">Nucleotide-binding</keyword>
<keyword id="KW-0808">Transferase</keyword>
<keyword id="KW-0862">Zinc</keyword>
<evidence type="ECO:0000255" key="1">
    <source>
        <dbReference type="HAMAP-Rule" id="MF_01234"/>
    </source>
</evidence>
<comment type="function">
    <text evidence="1">Catalyzes the phosphorylation of N-acetylmannosamine (ManNAc) to ManNAc-6-P.</text>
</comment>
<comment type="catalytic activity">
    <reaction evidence="1">
        <text>an N-acyl-D-mannosamine + ATP = an N-acyl-D-mannosamine 6-phosphate + ADP + H(+)</text>
        <dbReference type="Rhea" id="RHEA:23832"/>
        <dbReference type="ChEBI" id="CHEBI:15378"/>
        <dbReference type="ChEBI" id="CHEBI:16062"/>
        <dbReference type="ChEBI" id="CHEBI:30616"/>
        <dbReference type="ChEBI" id="CHEBI:57666"/>
        <dbReference type="ChEBI" id="CHEBI:456216"/>
        <dbReference type="EC" id="2.7.1.60"/>
    </reaction>
</comment>
<comment type="pathway">
    <text evidence="1">Amino-sugar metabolism; N-acetylneuraminate degradation; D-fructose 6-phosphate from N-acetylneuraminate: step 2/5.</text>
</comment>
<comment type="subunit">
    <text evidence="1">Homodimer.</text>
</comment>
<comment type="similarity">
    <text evidence="1">Belongs to the ROK (NagC/XylR) family. NanK subfamily.</text>
</comment>
<dbReference type="EC" id="2.7.1.60" evidence="1"/>
<dbReference type="EMBL" id="AL513382">
    <property type="protein sequence ID" value="CAD07853.1"/>
    <property type="molecule type" value="Genomic_DNA"/>
</dbReference>
<dbReference type="EMBL" id="AE014613">
    <property type="protein sequence ID" value="AAO70789.1"/>
    <property type="molecule type" value="Genomic_DNA"/>
</dbReference>
<dbReference type="RefSeq" id="NP_457715.1">
    <property type="nucleotide sequence ID" value="NC_003198.1"/>
</dbReference>
<dbReference type="RefSeq" id="WP_000208982.1">
    <property type="nucleotide sequence ID" value="NZ_WSUR01000003.1"/>
</dbReference>
<dbReference type="SMR" id="Q8Z3F1"/>
<dbReference type="STRING" id="220341.gene:17587366"/>
<dbReference type="KEGG" id="stt:t3253"/>
<dbReference type="KEGG" id="sty:STY3516"/>
<dbReference type="PATRIC" id="fig|220341.7.peg.3579"/>
<dbReference type="eggNOG" id="COG1940">
    <property type="taxonomic scope" value="Bacteria"/>
</dbReference>
<dbReference type="HOGENOM" id="CLU_036604_0_4_6"/>
<dbReference type="OMA" id="PICGCGR"/>
<dbReference type="OrthoDB" id="8772678at2"/>
<dbReference type="UniPathway" id="UPA00629">
    <property type="reaction ID" value="UER00681"/>
</dbReference>
<dbReference type="Proteomes" id="UP000000541">
    <property type="component" value="Chromosome"/>
</dbReference>
<dbReference type="Proteomes" id="UP000002670">
    <property type="component" value="Chromosome"/>
</dbReference>
<dbReference type="GO" id="GO:0005524">
    <property type="term" value="F:ATP binding"/>
    <property type="evidence" value="ECO:0007669"/>
    <property type="project" value="UniProtKB-UniRule"/>
</dbReference>
<dbReference type="GO" id="GO:0009384">
    <property type="term" value="F:N-acylmannosamine kinase activity"/>
    <property type="evidence" value="ECO:0007669"/>
    <property type="project" value="UniProtKB-UniRule"/>
</dbReference>
<dbReference type="GO" id="GO:0008270">
    <property type="term" value="F:zinc ion binding"/>
    <property type="evidence" value="ECO:0007669"/>
    <property type="project" value="UniProtKB-UniRule"/>
</dbReference>
<dbReference type="GO" id="GO:0019262">
    <property type="term" value="P:N-acetylneuraminate catabolic process"/>
    <property type="evidence" value="ECO:0007669"/>
    <property type="project" value="UniProtKB-UniRule"/>
</dbReference>
<dbReference type="FunFam" id="3.30.420.40:FF:000062">
    <property type="entry name" value="N-acetylmannosamine kinase"/>
    <property type="match status" value="1"/>
</dbReference>
<dbReference type="FunFam" id="3.30.420.40:FF:000063">
    <property type="entry name" value="N-acetylmannosamine kinase"/>
    <property type="match status" value="1"/>
</dbReference>
<dbReference type="Gene3D" id="3.30.420.40">
    <property type="match status" value="2"/>
</dbReference>
<dbReference type="HAMAP" id="MF_01234">
    <property type="entry name" value="ManNAc_kinase"/>
    <property type="match status" value="1"/>
</dbReference>
<dbReference type="InterPro" id="IPR043129">
    <property type="entry name" value="ATPase_NBD"/>
</dbReference>
<dbReference type="InterPro" id="IPR023945">
    <property type="entry name" value="ManNAc_kinase_bac"/>
</dbReference>
<dbReference type="InterPro" id="IPR000600">
    <property type="entry name" value="ROK"/>
</dbReference>
<dbReference type="InterPro" id="IPR049874">
    <property type="entry name" value="ROK_cs"/>
</dbReference>
<dbReference type="NCBIfam" id="NF047821">
    <property type="entry name" value="NactlManKinNanK"/>
    <property type="match status" value="1"/>
</dbReference>
<dbReference type="NCBIfam" id="NF003461">
    <property type="entry name" value="PRK05082.1"/>
    <property type="match status" value="1"/>
</dbReference>
<dbReference type="PANTHER" id="PTHR18964:SF169">
    <property type="entry name" value="N-ACETYLMANNOSAMINE KINASE"/>
    <property type="match status" value="1"/>
</dbReference>
<dbReference type="PANTHER" id="PTHR18964">
    <property type="entry name" value="ROK (REPRESSOR, ORF, KINASE) FAMILY"/>
    <property type="match status" value="1"/>
</dbReference>
<dbReference type="Pfam" id="PF00480">
    <property type="entry name" value="ROK"/>
    <property type="match status" value="1"/>
</dbReference>
<dbReference type="SUPFAM" id="SSF53067">
    <property type="entry name" value="Actin-like ATPase domain"/>
    <property type="match status" value="1"/>
</dbReference>
<dbReference type="PROSITE" id="PS01125">
    <property type="entry name" value="ROK"/>
    <property type="match status" value="1"/>
</dbReference>
<feature type="chain" id="PRO_0000095701" description="N-acetylmannosamine kinase">
    <location>
        <begin position="1"/>
        <end position="291"/>
    </location>
</feature>
<feature type="binding site" evidence="1">
    <location>
        <begin position="5"/>
        <end position="12"/>
    </location>
    <ligand>
        <name>ATP</name>
        <dbReference type="ChEBI" id="CHEBI:30616"/>
    </ligand>
</feature>
<feature type="binding site" evidence="1">
    <location>
        <begin position="132"/>
        <end position="139"/>
    </location>
    <ligand>
        <name>ATP</name>
        <dbReference type="ChEBI" id="CHEBI:30616"/>
    </ligand>
</feature>
<feature type="binding site" evidence="1">
    <location>
        <position position="156"/>
    </location>
    <ligand>
        <name>Zn(2+)</name>
        <dbReference type="ChEBI" id="CHEBI:29105"/>
    </ligand>
</feature>
<feature type="binding site" evidence="1">
    <location>
        <position position="166"/>
    </location>
    <ligand>
        <name>Zn(2+)</name>
        <dbReference type="ChEBI" id="CHEBI:29105"/>
    </ligand>
</feature>
<feature type="binding site" evidence="1">
    <location>
        <position position="168"/>
    </location>
    <ligand>
        <name>Zn(2+)</name>
        <dbReference type="ChEBI" id="CHEBI:29105"/>
    </ligand>
</feature>
<feature type="binding site" evidence="1">
    <location>
        <position position="173"/>
    </location>
    <ligand>
        <name>Zn(2+)</name>
        <dbReference type="ChEBI" id="CHEBI:29105"/>
    </ligand>
</feature>
<protein>
    <recommendedName>
        <fullName evidence="1">N-acetylmannosamine kinase</fullName>
        <ecNumber evidence="1">2.7.1.60</ecNumber>
    </recommendedName>
    <alternativeName>
        <fullName evidence="1">ManNAc kinase</fullName>
    </alternativeName>
    <alternativeName>
        <fullName evidence="1">N-acetyl-D-mannosamine kinase</fullName>
    </alternativeName>
</protein>
<proteinExistence type="inferred from homology"/>
<reference key="1">
    <citation type="journal article" date="2001" name="Nature">
        <title>Complete genome sequence of a multiple drug resistant Salmonella enterica serovar Typhi CT18.</title>
        <authorList>
            <person name="Parkhill J."/>
            <person name="Dougan G."/>
            <person name="James K.D."/>
            <person name="Thomson N.R."/>
            <person name="Pickard D."/>
            <person name="Wain J."/>
            <person name="Churcher C.M."/>
            <person name="Mungall K.L."/>
            <person name="Bentley S.D."/>
            <person name="Holden M.T.G."/>
            <person name="Sebaihia M."/>
            <person name="Baker S."/>
            <person name="Basham D."/>
            <person name="Brooks K."/>
            <person name="Chillingworth T."/>
            <person name="Connerton P."/>
            <person name="Cronin A."/>
            <person name="Davis P."/>
            <person name="Davies R.M."/>
            <person name="Dowd L."/>
            <person name="White N."/>
            <person name="Farrar J."/>
            <person name="Feltwell T."/>
            <person name="Hamlin N."/>
            <person name="Haque A."/>
            <person name="Hien T.T."/>
            <person name="Holroyd S."/>
            <person name="Jagels K."/>
            <person name="Krogh A."/>
            <person name="Larsen T.S."/>
            <person name="Leather S."/>
            <person name="Moule S."/>
            <person name="O'Gaora P."/>
            <person name="Parry C."/>
            <person name="Quail M.A."/>
            <person name="Rutherford K.M."/>
            <person name="Simmonds M."/>
            <person name="Skelton J."/>
            <person name="Stevens K."/>
            <person name="Whitehead S."/>
            <person name="Barrell B.G."/>
        </authorList>
    </citation>
    <scope>NUCLEOTIDE SEQUENCE [LARGE SCALE GENOMIC DNA]</scope>
    <source>
        <strain>CT18</strain>
    </source>
</reference>
<reference key="2">
    <citation type="journal article" date="2003" name="J. Bacteriol.">
        <title>Comparative genomics of Salmonella enterica serovar Typhi strains Ty2 and CT18.</title>
        <authorList>
            <person name="Deng W."/>
            <person name="Liou S.-R."/>
            <person name="Plunkett G. III"/>
            <person name="Mayhew G.F."/>
            <person name="Rose D.J."/>
            <person name="Burland V."/>
            <person name="Kodoyianni V."/>
            <person name="Schwartz D.C."/>
            <person name="Blattner F.R."/>
        </authorList>
    </citation>
    <scope>NUCLEOTIDE SEQUENCE [LARGE SCALE GENOMIC DNA]</scope>
    <source>
        <strain>ATCC 700931 / Ty2</strain>
    </source>
</reference>
<accession>Q8Z3F1</accession>
<organism>
    <name type="scientific">Salmonella typhi</name>
    <dbReference type="NCBI Taxonomy" id="90370"/>
    <lineage>
        <taxon>Bacteria</taxon>
        <taxon>Pseudomonadati</taxon>
        <taxon>Pseudomonadota</taxon>
        <taxon>Gammaproteobacteria</taxon>
        <taxon>Enterobacterales</taxon>
        <taxon>Enterobacteriaceae</taxon>
        <taxon>Salmonella</taxon>
    </lineage>
</organism>
<sequence length="291" mass="30178">MTTLAIDIGGTKLAAALIDNNLRISQRRELPTPASKTPDALREALKALVEPLRAEARQVAIASTGIIQEGMLLALNPHNLGGLLHFPLVQTLETIAGLPTLAVNDAQAAAWAEYHALPDDIRDMVFITVSTGVGGGVVCDGKLLTGKGGLAGHLGHTLADPHGPVCGCGRVGCVEAIASGRGMAAAARDDLAGCDAKTLFIRAGEGHQQARHLVSQSAQVIARMIADVKAITDCQCVVIGGSVGLAEGYLEQVRAFLMQEPEPYHVALSAARYRHDAGLLGAALLAQGDTL</sequence>
<name>NANK_SALTI</name>
<gene>
    <name evidence="1" type="primary">nanK</name>
    <name type="ordered locus">STY3516</name>
    <name type="ordered locus">t3253</name>
</gene>